<feature type="chain" id="PRO_0000155932" description="Ribonuclease Z">
    <location>
        <begin position="1"/>
        <end position="287"/>
    </location>
</feature>
<feature type="active site" description="Proton acceptor" evidence="1">
    <location>
        <position position="68"/>
    </location>
</feature>
<feature type="binding site" evidence="1">
    <location>
        <position position="64"/>
    </location>
    <ligand>
        <name>Zn(2+)</name>
        <dbReference type="ChEBI" id="CHEBI:29105"/>
        <label>1</label>
        <note>catalytic</note>
    </ligand>
</feature>
<feature type="binding site" evidence="1">
    <location>
        <position position="66"/>
    </location>
    <ligand>
        <name>Zn(2+)</name>
        <dbReference type="ChEBI" id="CHEBI:29105"/>
        <label>1</label>
        <note>catalytic</note>
    </ligand>
</feature>
<feature type="binding site" evidence="1">
    <location>
        <position position="68"/>
    </location>
    <ligand>
        <name>Zn(2+)</name>
        <dbReference type="ChEBI" id="CHEBI:29105"/>
        <label>2</label>
        <note>catalytic</note>
    </ligand>
</feature>
<feature type="binding site" evidence="1">
    <location>
        <position position="69"/>
    </location>
    <ligand>
        <name>Zn(2+)</name>
        <dbReference type="ChEBI" id="CHEBI:29105"/>
        <label>2</label>
        <note>catalytic</note>
    </ligand>
</feature>
<feature type="binding site" evidence="1">
    <location>
        <position position="124"/>
    </location>
    <ligand>
        <name>Zn(2+)</name>
        <dbReference type="ChEBI" id="CHEBI:29105"/>
        <label>1</label>
        <note>catalytic</note>
    </ligand>
</feature>
<feature type="binding site" evidence="1">
    <location>
        <position position="191"/>
    </location>
    <ligand>
        <name>Zn(2+)</name>
        <dbReference type="ChEBI" id="CHEBI:29105"/>
        <label>1</label>
        <note>catalytic</note>
    </ligand>
</feature>
<feature type="binding site" evidence="1">
    <location>
        <position position="191"/>
    </location>
    <ligand>
        <name>Zn(2+)</name>
        <dbReference type="ChEBI" id="CHEBI:29105"/>
        <label>2</label>
        <note>catalytic</note>
    </ligand>
</feature>
<feature type="binding site" evidence="1">
    <location>
        <position position="250"/>
    </location>
    <ligand>
        <name>Zn(2+)</name>
        <dbReference type="ChEBI" id="CHEBI:29105"/>
        <label>2</label>
        <note>catalytic</note>
    </ligand>
</feature>
<sequence>MPIVKLVILGSGGAVPKADRMLPAIYLEDWLGHRVLLDAGEGVQYRLLQIGISPSSLTLIAVTHMHEDHILGLPGLVITSKFLGGRLKVLAPKSMHGALSKLGVEVADSYEEERFKIKCVEVCHTVDACGWLIQWDVGYKLDLSKTSGLPKWALTELIKGKPVKIGDRIITPEEVADPAHKRFKYLLYTGDTAPCPEMWKKVGSVDVLIHEATFADDVSPSKAHEEGHSTVADAIEAARALNAQVLILTHVSARYPDKSRHRELASRISPPPYIYIPEDFETLLVKL</sequence>
<organism>
    <name type="scientific">Pyrobaculum aerophilum (strain ATCC 51768 / DSM 7523 / JCM 9630 / CIP 104966 / NBRC 100827 / IM2)</name>
    <dbReference type="NCBI Taxonomy" id="178306"/>
    <lineage>
        <taxon>Archaea</taxon>
        <taxon>Thermoproteota</taxon>
        <taxon>Thermoprotei</taxon>
        <taxon>Thermoproteales</taxon>
        <taxon>Thermoproteaceae</taxon>
        <taxon>Pyrobaculum</taxon>
    </lineage>
</organism>
<dbReference type="EC" id="3.1.26.11" evidence="1"/>
<dbReference type="EMBL" id="AE009441">
    <property type="protein sequence ID" value="AAL64764.1"/>
    <property type="molecule type" value="Genomic_DNA"/>
</dbReference>
<dbReference type="RefSeq" id="WP_011009232.1">
    <property type="nucleotide sequence ID" value="NC_003364.1"/>
</dbReference>
<dbReference type="SMR" id="Q8ZTJ7"/>
<dbReference type="FunCoup" id="Q8ZTJ7">
    <property type="interactions" value="121"/>
</dbReference>
<dbReference type="STRING" id="178306.PAE3218"/>
<dbReference type="EnsemblBacteria" id="AAL64764">
    <property type="protein sequence ID" value="AAL64764"/>
    <property type="gene ID" value="PAE3218"/>
</dbReference>
<dbReference type="GeneID" id="1463947"/>
<dbReference type="KEGG" id="pai:PAE3218"/>
<dbReference type="PATRIC" id="fig|178306.9.peg.2423"/>
<dbReference type="eggNOG" id="arCOG00501">
    <property type="taxonomic scope" value="Archaea"/>
</dbReference>
<dbReference type="HOGENOM" id="CLU_031317_2_1_2"/>
<dbReference type="InParanoid" id="Q8ZTJ7"/>
<dbReference type="BRENDA" id="3.1.26.11">
    <property type="organism ID" value="5239"/>
</dbReference>
<dbReference type="Proteomes" id="UP000002439">
    <property type="component" value="Chromosome"/>
</dbReference>
<dbReference type="GO" id="GO:0042781">
    <property type="term" value="F:3'-tRNA processing endoribonuclease activity"/>
    <property type="evidence" value="ECO:0000318"/>
    <property type="project" value="GO_Central"/>
</dbReference>
<dbReference type="GO" id="GO:0008270">
    <property type="term" value="F:zinc ion binding"/>
    <property type="evidence" value="ECO:0007669"/>
    <property type="project" value="UniProtKB-UniRule"/>
</dbReference>
<dbReference type="Gene3D" id="3.60.15.10">
    <property type="entry name" value="Ribonuclease Z/Hydroxyacylglutathione hydrolase-like"/>
    <property type="match status" value="1"/>
</dbReference>
<dbReference type="HAMAP" id="MF_01818">
    <property type="entry name" value="RNase_Z_BN"/>
    <property type="match status" value="1"/>
</dbReference>
<dbReference type="InterPro" id="IPR001279">
    <property type="entry name" value="Metallo-B-lactamas"/>
</dbReference>
<dbReference type="InterPro" id="IPR036866">
    <property type="entry name" value="RibonucZ/Hydroxyglut_hydro"/>
</dbReference>
<dbReference type="InterPro" id="IPR013471">
    <property type="entry name" value="RNase_Z/BN"/>
</dbReference>
<dbReference type="PANTHER" id="PTHR46018">
    <property type="entry name" value="ZINC PHOSPHODIESTERASE ELAC PROTEIN 1"/>
    <property type="match status" value="1"/>
</dbReference>
<dbReference type="PANTHER" id="PTHR46018:SF2">
    <property type="entry name" value="ZINC PHOSPHODIESTERASE ELAC PROTEIN 1"/>
    <property type="match status" value="1"/>
</dbReference>
<dbReference type="Pfam" id="PF12706">
    <property type="entry name" value="Lactamase_B_2"/>
    <property type="match status" value="1"/>
</dbReference>
<dbReference type="SUPFAM" id="SSF56281">
    <property type="entry name" value="Metallo-hydrolase/oxidoreductase"/>
    <property type="match status" value="1"/>
</dbReference>
<gene>
    <name evidence="1" type="primary">rnz</name>
    <name type="ordered locus">PAE3218</name>
</gene>
<accession>Q8ZTJ7</accession>
<comment type="function">
    <text evidence="1">Zinc phosphodiesterase, which displays some tRNA 3'-processing endonuclease activity. Probably involved in tRNA maturation, by removing a 3'-trailer from precursor tRNA.</text>
</comment>
<comment type="catalytic activity">
    <reaction evidence="1">
        <text>Endonucleolytic cleavage of RNA, removing extra 3' nucleotides from tRNA precursor, generating 3' termini of tRNAs. A 3'-hydroxy group is left at the tRNA terminus and a 5'-phosphoryl group is left at the trailer molecule.</text>
        <dbReference type="EC" id="3.1.26.11"/>
    </reaction>
</comment>
<comment type="cofactor">
    <cofactor evidence="1">
        <name>Zn(2+)</name>
        <dbReference type="ChEBI" id="CHEBI:29105"/>
    </cofactor>
    <text evidence="1">Binds 2 Zn(2+) ions.</text>
</comment>
<comment type="subunit">
    <text evidence="1">Homodimer.</text>
</comment>
<comment type="similarity">
    <text evidence="1">Belongs to the RNase Z family.</text>
</comment>
<name>RNZ_PYRAE</name>
<reference key="1">
    <citation type="journal article" date="2002" name="Proc. Natl. Acad. Sci. U.S.A.">
        <title>Genome sequence of the hyperthermophilic crenarchaeon Pyrobaculum aerophilum.</title>
        <authorList>
            <person name="Fitz-Gibbon S.T."/>
            <person name="Ladner H."/>
            <person name="Kim U.-J."/>
            <person name="Stetter K.O."/>
            <person name="Simon M.I."/>
            <person name="Miller J.H."/>
        </authorList>
    </citation>
    <scope>NUCLEOTIDE SEQUENCE [LARGE SCALE GENOMIC DNA]</scope>
    <source>
        <strain>ATCC 51768 / DSM 7523 / JCM 9630 / CIP 104966 / NBRC 100827 / IM2</strain>
    </source>
</reference>
<protein>
    <recommendedName>
        <fullName evidence="1">Ribonuclease Z</fullName>
        <shortName evidence="1">RNase Z</shortName>
        <ecNumber evidence="1">3.1.26.11</ecNumber>
    </recommendedName>
    <alternativeName>
        <fullName evidence="1">tRNA 3 endonuclease</fullName>
    </alternativeName>
    <alternativeName>
        <fullName evidence="1">tRNase Z</fullName>
    </alternativeName>
</protein>
<proteinExistence type="inferred from homology"/>
<keyword id="KW-0255">Endonuclease</keyword>
<keyword id="KW-0378">Hydrolase</keyword>
<keyword id="KW-0479">Metal-binding</keyword>
<keyword id="KW-0540">Nuclease</keyword>
<keyword id="KW-1185">Reference proteome</keyword>
<keyword id="KW-0819">tRNA processing</keyword>
<keyword id="KW-0862">Zinc</keyword>
<evidence type="ECO:0000255" key="1">
    <source>
        <dbReference type="HAMAP-Rule" id="MF_01818"/>
    </source>
</evidence>